<keyword id="KW-0507">mRNA processing</keyword>
<keyword id="KW-0539">Nucleus</keyword>
<keyword id="KW-0597">Phosphoprotein</keyword>
<keyword id="KW-1185">Reference proteome</keyword>
<comment type="function">
    <text evidence="1">Component of the cleavage and polyadenylation factor (CPF) complex, which plays a key role in polyadenylation-dependent pre-mRNA 3'-end formation and cooperates with cleavage factors including the CFIA complex and NAB4/CFIB. Component of the APT complex, which may be involved in polyadenylation-independent transcript 3'-end formation. PTI1 is required for 3'-end formation of snoRNAs.</text>
</comment>
<comment type="subunit">
    <text evidence="2">Component of the cleavage and polyadenylation factor (CPF) complex, which is composed of PTI1, SYC1, SSU72, GLC7, MPE1, REF2, PFS2, PTA1, YSH1/BRR5, SWD2, CFT2/YDH1, YTH1, CFT1/YHH1, FIP1 and PAP1. Component of the APT complex, which is a subcomplex of CPF, and is composed of PTI1, SYC1, SSU72, GLC7, REF2, PTA1 and SWD2.</text>
</comment>
<comment type="interaction">
    <interactant intactId="EBI-23382">
        <id>P39927</id>
    </interactant>
    <interactant intactId="EBI-14145">
        <id>Q01329</id>
        <label>PTA1</label>
    </interactant>
    <organismsDiffer>false</organismsDiffer>
    <experiments>4</experiments>
</comment>
<comment type="subcellular location">
    <subcellularLocation>
        <location evidence="2">Nucleus</location>
    </subcellularLocation>
</comment>
<comment type="miscellaneous">
    <text evidence="3">Present with 937 molecules/cell in log phase SD medium.</text>
</comment>
<feature type="chain" id="PRO_0000076294" description="Protein PTI1">
    <location>
        <begin position="1"/>
        <end position="425"/>
    </location>
</feature>
<feature type="modified residue" description="Phosphoserine" evidence="5">
    <location>
        <position position="272"/>
    </location>
</feature>
<feature type="sequence conflict" description="In Ref. 1; BAA03953." evidence="4" ref="1">
    <original>N</original>
    <variation>Y</variation>
    <location>
        <position position="300"/>
    </location>
</feature>
<dbReference type="EMBL" id="D16502">
    <property type="protein sequence ID" value="BAA03953.1"/>
    <property type="molecule type" value="Genomic_DNA"/>
</dbReference>
<dbReference type="EMBL" id="X85807">
    <property type="protein sequence ID" value="CAA59813.1"/>
    <property type="molecule type" value="Genomic_DNA"/>
</dbReference>
<dbReference type="EMBL" id="Z72941">
    <property type="protein sequence ID" value="CAA97170.1"/>
    <property type="molecule type" value="Genomic_DNA"/>
</dbReference>
<dbReference type="EMBL" id="AY557841">
    <property type="protein sequence ID" value="AAS56167.1"/>
    <property type="molecule type" value="Genomic_DNA"/>
</dbReference>
<dbReference type="EMBL" id="BK006941">
    <property type="protein sequence ID" value="DAA08247.1"/>
    <property type="molecule type" value="Genomic_DNA"/>
</dbReference>
<dbReference type="PIR" id="S60446">
    <property type="entry name" value="S60446"/>
</dbReference>
<dbReference type="RefSeq" id="NP_011672.1">
    <property type="nucleotide sequence ID" value="NM_001181285.1"/>
</dbReference>
<dbReference type="SMR" id="P39927"/>
<dbReference type="BioGRID" id="33404">
    <property type="interactions" value="545"/>
</dbReference>
<dbReference type="ComplexPortal" id="CPX-1053">
    <property type="entry name" value="Cleavage and polyadenylation specificity factor complex"/>
</dbReference>
<dbReference type="DIP" id="DIP-4402N"/>
<dbReference type="FunCoup" id="P39927">
    <property type="interactions" value="358"/>
</dbReference>
<dbReference type="IntAct" id="P39927">
    <property type="interactions" value="18"/>
</dbReference>
<dbReference type="MINT" id="P39927"/>
<dbReference type="STRING" id="4932.YGR156W"/>
<dbReference type="GlyGen" id="P39927">
    <property type="glycosylation" value="1 site, 1 O-linked glycan (1 site)"/>
</dbReference>
<dbReference type="iPTMnet" id="P39927"/>
<dbReference type="PaxDb" id="4932-YGR156W"/>
<dbReference type="PeptideAtlas" id="P39927"/>
<dbReference type="EnsemblFungi" id="YGR156W_mRNA">
    <property type="protein sequence ID" value="YGR156W"/>
    <property type="gene ID" value="YGR156W"/>
</dbReference>
<dbReference type="GeneID" id="853060"/>
<dbReference type="KEGG" id="sce:YGR156W"/>
<dbReference type="AGR" id="SGD:S000003388"/>
<dbReference type="SGD" id="S000003388">
    <property type="gene designation" value="PTI1"/>
</dbReference>
<dbReference type="VEuPathDB" id="FungiDB:YGR156W"/>
<dbReference type="eggNOG" id="KOG0108">
    <property type="taxonomic scope" value="Eukaryota"/>
</dbReference>
<dbReference type="HOGENOM" id="CLU_040439_0_0_1"/>
<dbReference type="InParanoid" id="P39927"/>
<dbReference type="OMA" id="EMGFINY"/>
<dbReference type="OrthoDB" id="272703at2759"/>
<dbReference type="BioCyc" id="YEAST:G3O-30857-MONOMER"/>
<dbReference type="BioGRID-ORCS" id="853060">
    <property type="hits" value="0 hits in 10 CRISPR screens"/>
</dbReference>
<dbReference type="PRO" id="PR:P39927"/>
<dbReference type="Proteomes" id="UP000002311">
    <property type="component" value="Chromosome VII"/>
</dbReference>
<dbReference type="RNAct" id="P39927">
    <property type="molecule type" value="protein"/>
</dbReference>
<dbReference type="GO" id="GO:0005829">
    <property type="term" value="C:cytosol"/>
    <property type="evidence" value="ECO:0000314"/>
    <property type="project" value="SGD"/>
</dbReference>
<dbReference type="GO" id="GO:0005847">
    <property type="term" value="C:mRNA cleavage and polyadenylation specificity factor complex"/>
    <property type="evidence" value="ECO:0000314"/>
    <property type="project" value="SGD"/>
</dbReference>
<dbReference type="GO" id="GO:0005634">
    <property type="term" value="C:nucleus"/>
    <property type="evidence" value="ECO:0000314"/>
    <property type="project" value="SGD"/>
</dbReference>
<dbReference type="GO" id="GO:0003729">
    <property type="term" value="F:mRNA binding"/>
    <property type="evidence" value="ECO:0000318"/>
    <property type="project" value="GO_Central"/>
</dbReference>
<dbReference type="GO" id="GO:0031124">
    <property type="term" value="P:mRNA 3'-end processing"/>
    <property type="evidence" value="ECO:0007669"/>
    <property type="project" value="InterPro"/>
</dbReference>
<dbReference type="GO" id="GO:0006397">
    <property type="term" value="P:mRNA processing"/>
    <property type="evidence" value="ECO:0000315"/>
    <property type="project" value="SGD"/>
</dbReference>
<dbReference type="GO" id="GO:0031126">
    <property type="term" value="P:sno(s)RNA 3'-end processing"/>
    <property type="evidence" value="ECO:0000315"/>
    <property type="project" value="SGD"/>
</dbReference>
<dbReference type="GO" id="GO:0030847">
    <property type="term" value="P:termination of RNA polymerase II transcription, exosome-dependent"/>
    <property type="evidence" value="ECO:0000315"/>
    <property type="project" value="SGD"/>
</dbReference>
<dbReference type="GO" id="GO:0030846">
    <property type="term" value="P:termination of RNA polymerase II transcription, poly(A)-coupled"/>
    <property type="evidence" value="ECO:0000303"/>
    <property type="project" value="ComplexPortal"/>
</dbReference>
<dbReference type="CDD" id="cd00590">
    <property type="entry name" value="RRM_SF"/>
    <property type="match status" value="1"/>
</dbReference>
<dbReference type="Gene3D" id="3.30.70.330">
    <property type="match status" value="1"/>
</dbReference>
<dbReference type="Gene3D" id="1.10.20.70">
    <property type="entry name" value="Transcription termination and cleavage factor, C-terminal domain"/>
    <property type="match status" value="1"/>
</dbReference>
<dbReference type="InterPro" id="IPR025742">
    <property type="entry name" value="CSTF2_hinge"/>
</dbReference>
<dbReference type="InterPro" id="IPR026896">
    <property type="entry name" value="CSTF_C"/>
</dbReference>
<dbReference type="InterPro" id="IPR038192">
    <property type="entry name" value="CSTF_C_sf"/>
</dbReference>
<dbReference type="InterPro" id="IPR012677">
    <property type="entry name" value="Nucleotide-bd_a/b_plait_sf"/>
</dbReference>
<dbReference type="InterPro" id="IPR035979">
    <property type="entry name" value="RBD_domain_sf"/>
</dbReference>
<dbReference type="InterPro" id="IPR000504">
    <property type="entry name" value="RRM_dom"/>
</dbReference>
<dbReference type="PANTHER" id="PTHR45735">
    <property type="entry name" value="CLEAVAGE STIMULATION FACTOR SUBUNIT 2"/>
    <property type="match status" value="1"/>
</dbReference>
<dbReference type="PANTHER" id="PTHR45735:SF11">
    <property type="entry name" value="PROTEIN PTI1"/>
    <property type="match status" value="1"/>
</dbReference>
<dbReference type="Pfam" id="PF14327">
    <property type="entry name" value="CSTF2_hinge"/>
    <property type="match status" value="1"/>
</dbReference>
<dbReference type="Pfam" id="PF14304">
    <property type="entry name" value="CSTF_C"/>
    <property type="match status" value="1"/>
</dbReference>
<dbReference type="SMART" id="SM00360">
    <property type="entry name" value="RRM"/>
    <property type="match status" value="1"/>
</dbReference>
<dbReference type="SUPFAM" id="SSF54928">
    <property type="entry name" value="RNA-binding domain, RBD"/>
    <property type="match status" value="1"/>
</dbReference>
<name>PTI1_YEAST</name>
<gene>
    <name type="primary">PTI1</name>
    <name type="ordered locus">YGR156W</name>
    <name type="ORF">G6670</name>
</gene>
<protein>
    <recommendedName>
        <fullName>Protein PTI1</fullName>
    </recommendedName>
</protein>
<accession>P39927</accession>
<accession>D6VUT6</accession>
<evidence type="ECO:0000269" key="1">
    <source>
    </source>
</evidence>
<evidence type="ECO:0000269" key="2">
    <source>
    </source>
</evidence>
<evidence type="ECO:0000269" key="3">
    <source>
    </source>
</evidence>
<evidence type="ECO:0000305" key="4"/>
<evidence type="ECO:0007744" key="5">
    <source>
    </source>
</evidence>
<reference key="1">
    <citation type="submission" date="1993-06" db="EMBL/GenBank/DDBJ databases">
        <authorList>
            <person name="Ono B."/>
            <person name="Inoue T."/>
            <person name="Kijima K."/>
            <person name="Matsuda A."/>
            <person name="Negishi K."/>
            <person name="Shinoda S."/>
        </authorList>
    </citation>
    <scope>NUCLEOTIDE SEQUENCE [GENOMIC DNA]</scope>
    <source>
        <strain>A5-8-1A</strain>
    </source>
</reference>
<reference key="2">
    <citation type="journal article" date="1995" name="Yeast">
        <title>The sequence of a 27 kb segment on the right arm of chromosome VII from Saccharomyces cerevisiae reveals MOL1, NAT2, RPL30B, RSR1, CYS4, PEM1/CHO2, NSR1 genes and ten new open reading frames.</title>
        <authorList>
            <person name="Skala J."/>
            <person name="Nawrocki A."/>
            <person name="Goffeau A."/>
        </authorList>
    </citation>
    <scope>NUCLEOTIDE SEQUENCE [GENOMIC DNA]</scope>
    <source>
        <strain>ATCC 204508 / S288c</strain>
    </source>
</reference>
<reference key="3">
    <citation type="journal article" date="1997" name="Nature">
        <title>The nucleotide sequence of Saccharomyces cerevisiae chromosome VII.</title>
        <authorList>
            <person name="Tettelin H."/>
            <person name="Agostoni-Carbone M.L."/>
            <person name="Albermann K."/>
            <person name="Albers M."/>
            <person name="Arroyo J."/>
            <person name="Backes U."/>
            <person name="Barreiros T."/>
            <person name="Bertani I."/>
            <person name="Bjourson A.J."/>
            <person name="Brueckner M."/>
            <person name="Bruschi C.V."/>
            <person name="Carignani G."/>
            <person name="Castagnoli L."/>
            <person name="Cerdan E."/>
            <person name="Clemente M.L."/>
            <person name="Coblenz A."/>
            <person name="Coglievina M."/>
            <person name="Coissac E."/>
            <person name="Defoor E."/>
            <person name="Del Bino S."/>
            <person name="Delius H."/>
            <person name="Delneri D."/>
            <person name="de Wergifosse P."/>
            <person name="Dujon B."/>
            <person name="Durand P."/>
            <person name="Entian K.-D."/>
            <person name="Eraso P."/>
            <person name="Escribano V."/>
            <person name="Fabiani L."/>
            <person name="Fartmann B."/>
            <person name="Feroli F."/>
            <person name="Feuermann M."/>
            <person name="Frontali L."/>
            <person name="Garcia-Gonzalez M."/>
            <person name="Garcia-Saez M.I."/>
            <person name="Goffeau A."/>
            <person name="Guerreiro P."/>
            <person name="Hani J."/>
            <person name="Hansen M."/>
            <person name="Hebling U."/>
            <person name="Hernandez K."/>
            <person name="Heumann K."/>
            <person name="Hilger F."/>
            <person name="Hofmann B."/>
            <person name="Indge K.J."/>
            <person name="James C.M."/>
            <person name="Klima R."/>
            <person name="Koetter P."/>
            <person name="Kramer B."/>
            <person name="Kramer W."/>
            <person name="Lauquin G."/>
            <person name="Leuther H."/>
            <person name="Louis E.J."/>
            <person name="Maillier E."/>
            <person name="Marconi A."/>
            <person name="Martegani E."/>
            <person name="Mazon M.J."/>
            <person name="Mazzoni C."/>
            <person name="McReynolds A.D.K."/>
            <person name="Melchioretto P."/>
            <person name="Mewes H.-W."/>
            <person name="Minenkova O."/>
            <person name="Mueller-Auer S."/>
            <person name="Nawrocki A."/>
            <person name="Netter P."/>
            <person name="Neu R."/>
            <person name="Nombela C."/>
            <person name="Oliver S.G."/>
            <person name="Panzeri L."/>
            <person name="Paoluzi S."/>
            <person name="Plevani P."/>
            <person name="Portetelle D."/>
            <person name="Portillo F."/>
            <person name="Potier S."/>
            <person name="Purnelle B."/>
            <person name="Rieger M."/>
            <person name="Riles L."/>
            <person name="Rinaldi T."/>
            <person name="Robben J."/>
            <person name="Rodrigues-Pousada C."/>
            <person name="Rodriguez-Belmonte E."/>
            <person name="Rodriguez-Torres A.M."/>
            <person name="Rose M."/>
            <person name="Ruzzi M."/>
            <person name="Saliola M."/>
            <person name="Sanchez-Perez M."/>
            <person name="Schaefer B."/>
            <person name="Schaefer M."/>
            <person name="Scharfe M."/>
            <person name="Schmidheini T."/>
            <person name="Schreer A."/>
            <person name="Skala J."/>
            <person name="Souciet J.-L."/>
            <person name="Steensma H.Y."/>
            <person name="Talla E."/>
            <person name="Thierry A."/>
            <person name="Vandenbol M."/>
            <person name="van der Aart Q.J.M."/>
            <person name="Van Dyck L."/>
            <person name="Vanoni M."/>
            <person name="Verhasselt P."/>
            <person name="Voet M."/>
            <person name="Volckaert G."/>
            <person name="Wambutt R."/>
            <person name="Watson M.D."/>
            <person name="Weber N."/>
            <person name="Wedler E."/>
            <person name="Wedler H."/>
            <person name="Wipfli P."/>
            <person name="Wolf K."/>
            <person name="Wright L.F."/>
            <person name="Zaccaria P."/>
            <person name="Zimmermann M."/>
            <person name="Zollner A."/>
            <person name="Kleine K."/>
        </authorList>
    </citation>
    <scope>NUCLEOTIDE SEQUENCE [LARGE SCALE GENOMIC DNA]</scope>
    <source>
        <strain>ATCC 204508 / S288c</strain>
    </source>
</reference>
<reference key="4">
    <citation type="journal article" date="2014" name="G3 (Bethesda)">
        <title>The reference genome sequence of Saccharomyces cerevisiae: Then and now.</title>
        <authorList>
            <person name="Engel S.R."/>
            <person name="Dietrich F.S."/>
            <person name="Fisk D.G."/>
            <person name="Binkley G."/>
            <person name="Balakrishnan R."/>
            <person name="Costanzo M.C."/>
            <person name="Dwight S.S."/>
            <person name="Hitz B.C."/>
            <person name="Karra K."/>
            <person name="Nash R.S."/>
            <person name="Weng S."/>
            <person name="Wong E.D."/>
            <person name="Lloyd P."/>
            <person name="Skrzypek M.S."/>
            <person name="Miyasato S.R."/>
            <person name="Simison M."/>
            <person name="Cherry J.M."/>
        </authorList>
    </citation>
    <scope>GENOME REANNOTATION</scope>
    <source>
        <strain>ATCC 204508 / S288c</strain>
    </source>
</reference>
<reference key="5">
    <citation type="journal article" date="2007" name="Genome Res.">
        <title>Approaching a complete repository of sequence-verified protein-encoding clones for Saccharomyces cerevisiae.</title>
        <authorList>
            <person name="Hu Y."/>
            <person name="Rolfs A."/>
            <person name="Bhullar B."/>
            <person name="Murthy T.V.S."/>
            <person name="Zhu C."/>
            <person name="Berger M.F."/>
            <person name="Camargo A.A."/>
            <person name="Kelley F."/>
            <person name="McCarron S."/>
            <person name="Jepson D."/>
            <person name="Richardson A."/>
            <person name="Raphael J."/>
            <person name="Moreira D."/>
            <person name="Taycher E."/>
            <person name="Zuo D."/>
            <person name="Mohr S."/>
            <person name="Kane M.F."/>
            <person name="Williamson J."/>
            <person name="Simpson A.J.G."/>
            <person name="Bulyk M.L."/>
            <person name="Harlow E."/>
            <person name="Marsischky G."/>
            <person name="Kolodner R.D."/>
            <person name="LaBaer J."/>
        </authorList>
    </citation>
    <scope>NUCLEOTIDE SEQUENCE [GENOMIC DNA]</scope>
    <source>
        <strain>ATCC 204508 / S288c</strain>
    </source>
</reference>
<reference key="6">
    <citation type="journal article" date="2003" name="EMBO J.">
        <title>Pti1p and Ref2p found in association with the mRNA 3' end formation complex direct snoRNA maturation.</title>
        <authorList>
            <person name="Dheur S."/>
            <person name="Vo le T.A."/>
            <person name="Voisinet-Hakil F."/>
            <person name="Minet M."/>
            <person name="Schmitter J.-M."/>
            <person name="Lacroute F."/>
            <person name="Wyers F."/>
            <person name="Minvielle-Sebastia L."/>
        </authorList>
    </citation>
    <scope>FUNCTION IN SNORNA 3-END FORMATION</scope>
</reference>
<reference key="7">
    <citation type="journal article" date="2003" name="Nature">
        <title>Global analysis of protein expression in yeast.</title>
        <authorList>
            <person name="Ghaemmaghami S."/>
            <person name="Huh W.-K."/>
            <person name="Bower K."/>
            <person name="Howson R.W."/>
            <person name="Belle A."/>
            <person name="Dephoure N."/>
            <person name="O'Shea E.K."/>
            <person name="Weissman J.S."/>
        </authorList>
    </citation>
    <scope>LEVEL OF PROTEIN EXPRESSION [LARGE SCALE ANALYSIS]</scope>
</reference>
<reference key="8">
    <citation type="journal article" date="2003" name="J. Biol. Chem.">
        <title>Organization and function of APT, a subcomplex of the yeast cleavage and polyadenylation factor involved in the formation of mRNA and small nucleolar RNA 3'-ends.</title>
        <authorList>
            <person name="Nedea E."/>
            <person name="He X."/>
            <person name="Kim M."/>
            <person name="Pootoolal J."/>
            <person name="Zhong G."/>
            <person name="Canadien V."/>
            <person name="Hughes T."/>
            <person name="Buratowski S."/>
            <person name="Moore C.L."/>
            <person name="Greenblatt J."/>
        </authorList>
    </citation>
    <scope>IDENTIFICATION IN THE CPF COMPLEX</scope>
    <scope>COMPOSITION OF THE APT COMPLEX</scope>
    <scope>SUBCELLULAR LOCATION</scope>
    <scope>IDENTIFICATION BY MASS SPECTROMETRY</scope>
</reference>
<reference key="9">
    <citation type="journal article" date="2007" name="J. Proteome Res.">
        <title>Large-scale phosphorylation analysis of alpha-factor-arrested Saccharomyces cerevisiae.</title>
        <authorList>
            <person name="Li X."/>
            <person name="Gerber S.A."/>
            <person name="Rudner A.D."/>
            <person name="Beausoleil S.A."/>
            <person name="Haas W."/>
            <person name="Villen J."/>
            <person name="Elias J.E."/>
            <person name="Gygi S.P."/>
        </authorList>
    </citation>
    <scope>IDENTIFICATION BY MASS SPECTROMETRY [LARGE SCALE ANALYSIS]</scope>
    <source>
        <strain>ADR376</strain>
    </source>
</reference>
<reference key="10">
    <citation type="journal article" date="2008" name="Mol. Cell. Proteomics">
        <title>A multidimensional chromatography technology for in-depth phosphoproteome analysis.</title>
        <authorList>
            <person name="Albuquerque C.P."/>
            <person name="Smolka M.B."/>
            <person name="Payne S.H."/>
            <person name="Bafna V."/>
            <person name="Eng J."/>
            <person name="Zhou H."/>
        </authorList>
    </citation>
    <scope>IDENTIFICATION BY MASS SPECTROMETRY [LARGE SCALE ANALYSIS]</scope>
</reference>
<reference key="11">
    <citation type="journal article" date="2009" name="Science">
        <title>Global analysis of Cdk1 substrate phosphorylation sites provides insights into evolution.</title>
        <authorList>
            <person name="Holt L.J."/>
            <person name="Tuch B.B."/>
            <person name="Villen J."/>
            <person name="Johnson A.D."/>
            <person name="Gygi S.P."/>
            <person name="Morgan D.O."/>
        </authorList>
    </citation>
    <scope>PHOSPHORYLATION [LARGE SCALE ANALYSIS] AT SER-272</scope>
    <scope>IDENTIFICATION BY MASS SPECTROMETRY [LARGE SCALE ANALYSIS]</scope>
</reference>
<organism>
    <name type="scientific">Saccharomyces cerevisiae (strain ATCC 204508 / S288c)</name>
    <name type="common">Baker's yeast</name>
    <dbReference type="NCBI Taxonomy" id="559292"/>
    <lineage>
        <taxon>Eukaryota</taxon>
        <taxon>Fungi</taxon>
        <taxon>Dikarya</taxon>
        <taxon>Ascomycota</taxon>
        <taxon>Saccharomycotina</taxon>
        <taxon>Saccharomycetes</taxon>
        <taxon>Saccharomycetales</taxon>
        <taxon>Saccharomycetaceae</taxon>
        <taxon>Saccharomyces</taxon>
    </lineage>
</organism>
<sequence length="425" mass="46983">MTDPRRRTGRHFLTPENLSSTLQITNLPPEWNQDIITSVVAGSGPVIDIKAKNDPRTGKLTGVLFDYLTSKDCKRAWEILNRIENFPVKIEQIIPPNYKDHLRETANKNSQKQVLQLNRDSYPFEAGLELPFEMVTEVPIPRRPPPPQAANNTNSVSNNTNIQFPDILSKASKHLPSFQDGSIIAPDKISQNLSKIPPLQLIEIISNLKILSNQENIQKSQLESFLDTNSDITISVTQALLEMGFIDYSVVTKVLKSQVGEAPSLLSSNNTSNSNTPVSVIRNNTPLHVPSNEVSNNPNNMPLNVAMPMPMSTPPFIPLPLQQQPFGFAPPGPFMPPAQGPSMGQPVLANQLGQVQQQNISSTEGPSNANKANDSGTINMAKLQLLPENQQDMIKQVLTLTPAQIQSLPSDQQLMVENFRKEYII</sequence>
<proteinExistence type="evidence at protein level"/>